<evidence type="ECO:0000255" key="1">
    <source>
        <dbReference type="HAMAP-Rule" id="MF_01855"/>
    </source>
</evidence>
<evidence type="ECO:0000305" key="2"/>
<comment type="catalytic activity">
    <reaction evidence="1">
        <text>beta-D-fructose 1,6-bisphosphate + H2O = beta-D-fructose 6-phosphate + phosphate</text>
        <dbReference type="Rhea" id="RHEA:11064"/>
        <dbReference type="ChEBI" id="CHEBI:15377"/>
        <dbReference type="ChEBI" id="CHEBI:32966"/>
        <dbReference type="ChEBI" id="CHEBI:43474"/>
        <dbReference type="ChEBI" id="CHEBI:57634"/>
        <dbReference type="EC" id="3.1.3.11"/>
    </reaction>
</comment>
<comment type="cofactor">
    <cofactor evidence="1">
        <name>Mg(2+)</name>
        <dbReference type="ChEBI" id="CHEBI:18420"/>
    </cofactor>
    <text evidence="1">Binds 2 magnesium ions per subunit.</text>
</comment>
<comment type="pathway">
    <text evidence="1">Carbohydrate biosynthesis; gluconeogenesis.</text>
</comment>
<comment type="subunit">
    <text evidence="1">Homotetramer.</text>
</comment>
<comment type="subcellular location">
    <subcellularLocation>
        <location evidence="1">Cytoplasm</location>
    </subcellularLocation>
</comment>
<comment type="similarity">
    <text evidence="1">Belongs to the FBPase class 1 family.</text>
</comment>
<comment type="sequence caution" evidence="2">
    <conflict type="erroneous initiation">
        <sequence resource="EMBL-CDS" id="ABZ97669"/>
    </conflict>
</comment>
<keyword id="KW-0119">Carbohydrate metabolism</keyword>
<keyword id="KW-0963">Cytoplasm</keyword>
<keyword id="KW-0378">Hydrolase</keyword>
<keyword id="KW-0460">Magnesium</keyword>
<keyword id="KW-0479">Metal-binding</keyword>
<keyword id="KW-1185">Reference proteome</keyword>
<gene>
    <name evidence="1" type="primary">fbp</name>
    <name type="ordered locus">LEPBI_I1562</name>
</gene>
<proteinExistence type="inferred from homology"/>
<sequence>MNATPKQKKLISLSQFILEEQLKIPHASGEFSALLSHLVYAAKIVGREVRKAGLLDDILGATEDTNVQGETQMKLDQYADNAFNQSLKICGHLCVLASEEHEDIIPIPGGYNIGKYTMAIDPLDGSSNIDTNVSIGTIFSIHQRLEPNSKEPGNERDLLQKGHLQRCAGYIIYGSSTMLVLSTGKGVSGFTLDPSVGEFLLSHPNMQMPESGDIYSANEGNASYWSPEVQAYLQKIKSIEGGKKPKTARYIGSLVADFHRNLLKGGIFLYPNDTKSSKYPNGKLRLLYEAAPMAFIAEQAGGMAVTVKGERILDLTPKDLHERTTLIIGSKKEVEEFLTFVAK</sequence>
<dbReference type="EC" id="3.1.3.11" evidence="1"/>
<dbReference type="EMBL" id="CP000786">
    <property type="protein sequence ID" value="ABZ97669.1"/>
    <property type="status" value="ALT_INIT"/>
    <property type="molecule type" value="Genomic_DNA"/>
</dbReference>
<dbReference type="RefSeq" id="WP_012476257.1">
    <property type="nucleotide sequence ID" value="NC_010602.1"/>
</dbReference>
<dbReference type="SMR" id="B0SQL1"/>
<dbReference type="STRING" id="456481.LEPBI_I1562"/>
<dbReference type="KEGG" id="lbi:LEPBI_I1562"/>
<dbReference type="HOGENOM" id="CLU_039977_2_2_12"/>
<dbReference type="OrthoDB" id="9806756at2"/>
<dbReference type="BioCyc" id="LBIF456481:LEPBI_RS07700-MONOMER"/>
<dbReference type="UniPathway" id="UPA00138"/>
<dbReference type="Proteomes" id="UP000001847">
    <property type="component" value="Chromosome I"/>
</dbReference>
<dbReference type="GO" id="GO:0005829">
    <property type="term" value="C:cytosol"/>
    <property type="evidence" value="ECO:0007669"/>
    <property type="project" value="TreeGrafter"/>
</dbReference>
<dbReference type="GO" id="GO:0042132">
    <property type="term" value="F:fructose 1,6-bisphosphate 1-phosphatase activity"/>
    <property type="evidence" value="ECO:0007669"/>
    <property type="project" value="UniProtKB-UniRule"/>
</dbReference>
<dbReference type="GO" id="GO:0000287">
    <property type="term" value="F:magnesium ion binding"/>
    <property type="evidence" value="ECO:0007669"/>
    <property type="project" value="UniProtKB-UniRule"/>
</dbReference>
<dbReference type="GO" id="GO:0030388">
    <property type="term" value="P:fructose 1,6-bisphosphate metabolic process"/>
    <property type="evidence" value="ECO:0007669"/>
    <property type="project" value="TreeGrafter"/>
</dbReference>
<dbReference type="GO" id="GO:0006002">
    <property type="term" value="P:fructose 6-phosphate metabolic process"/>
    <property type="evidence" value="ECO:0007669"/>
    <property type="project" value="TreeGrafter"/>
</dbReference>
<dbReference type="GO" id="GO:0006000">
    <property type="term" value="P:fructose metabolic process"/>
    <property type="evidence" value="ECO:0007669"/>
    <property type="project" value="TreeGrafter"/>
</dbReference>
<dbReference type="GO" id="GO:0006094">
    <property type="term" value="P:gluconeogenesis"/>
    <property type="evidence" value="ECO:0007669"/>
    <property type="project" value="UniProtKB-UniRule"/>
</dbReference>
<dbReference type="GO" id="GO:0005986">
    <property type="term" value="P:sucrose biosynthetic process"/>
    <property type="evidence" value="ECO:0007669"/>
    <property type="project" value="TreeGrafter"/>
</dbReference>
<dbReference type="CDD" id="cd00354">
    <property type="entry name" value="FBPase"/>
    <property type="match status" value="1"/>
</dbReference>
<dbReference type="FunFam" id="3.30.540.10:FF:000002">
    <property type="entry name" value="Fructose-1,6-bisphosphatase class 1"/>
    <property type="match status" value="1"/>
</dbReference>
<dbReference type="FunFam" id="3.40.190.80:FF:000001">
    <property type="entry name" value="Fructose-1,6-bisphosphatase class 1"/>
    <property type="match status" value="1"/>
</dbReference>
<dbReference type="Gene3D" id="3.40.190.80">
    <property type="match status" value="1"/>
</dbReference>
<dbReference type="Gene3D" id="3.30.540.10">
    <property type="entry name" value="Fructose-1,6-Bisphosphatase, subunit A, domain 1"/>
    <property type="match status" value="1"/>
</dbReference>
<dbReference type="HAMAP" id="MF_01855">
    <property type="entry name" value="FBPase_class1"/>
    <property type="match status" value="1"/>
</dbReference>
<dbReference type="InterPro" id="IPR044015">
    <property type="entry name" value="FBPase_C_dom"/>
</dbReference>
<dbReference type="InterPro" id="IPR000146">
    <property type="entry name" value="FBPase_class-1"/>
</dbReference>
<dbReference type="InterPro" id="IPR033391">
    <property type="entry name" value="FBPase_N"/>
</dbReference>
<dbReference type="InterPro" id="IPR028343">
    <property type="entry name" value="FBPtase"/>
</dbReference>
<dbReference type="InterPro" id="IPR020548">
    <property type="entry name" value="Fructose_bisphosphatase_AS"/>
</dbReference>
<dbReference type="NCBIfam" id="NF006778">
    <property type="entry name" value="PRK09293.1-1"/>
    <property type="match status" value="1"/>
</dbReference>
<dbReference type="PANTHER" id="PTHR11556">
    <property type="entry name" value="FRUCTOSE-1,6-BISPHOSPHATASE-RELATED"/>
    <property type="match status" value="1"/>
</dbReference>
<dbReference type="PANTHER" id="PTHR11556:SF35">
    <property type="entry name" value="SEDOHEPTULOSE-1,7-BISPHOSPHATASE, CHLOROPLASTIC"/>
    <property type="match status" value="1"/>
</dbReference>
<dbReference type="Pfam" id="PF00316">
    <property type="entry name" value="FBPase"/>
    <property type="match status" value="1"/>
</dbReference>
<dbReference type="Pfam" id="PF18913">
    <property type="entry name" value="FBPase_C"/>
    <property type="match status" value="1"/>
</dbReference>
<dbReference type="PIRSF" id="PIRSF500210">
    <property type="entry name" value="FBPtase"/>
    <property type="match status" value="1"/>
</dbReference>
<dbReference type="PIRSF" id="PIRSF000904">
    <property type="entry name" value="FBPtase_SBPase"/>
    <property type="match status" value="1"/>
</dbReference>
<dbReference type="PRINTS" id="PR00115">
    <property type="entry name" value="F16BPHPHTASE"/>
</dbReference>
<dbReference type="SUPFAM" id="SSF56655">
    <property type="entry name" value="Carbohydrate phosphatase"/>
    <property type="match status" value="1"/>
</dbReference>
<dbReference type="PROSITE" id="PS00124">
    <property type="entry name" value="FBPASE"/>
    <property type="match status" value="1"/>
</dbReference>
<protein>
    <recommendedName>
        <fullName evidence="1">Fructose-1,6-bisphosphatase class 1</fullName>
        <shortName evidence="1">FBPase class 1</shortName>
        <ecNumber evidence="1">3.1.3.11</ecNumber>
    </recommendedName>
    <alternativeName>
        <fullName evidence="1">D-fructose-1,6-bisphosphate 1-phosphohydrolase class 1</fullName>
    </alternativeName>
</protein>
<organism>
    <name type="scientific">Leptospira biflexa serovar Patoc (strain Patoc 1 / ATCC 23582 / Paris)</name>
    <dbReference type="NCBI Taxonomy" id="456481"/>
    <lineage>
        <taxon>Bacteria</taxon>
        <taxon>Pseudomonadati</taxon>
        <taxon>Spirochaetota</taxon>
        <taxon>Spirochaetia</taxon>
        <taxon>Leptospirales</taxon>
        <taxon>Leptospiraceae</taxon>
        <taxon>Leptospira</taxon>
    </lineage>
</organism>
<reference key="1">
    <citation type="journal article" date="2008" name="PLoS ONE">
        <title>Genome sequence of the saprophyte Leptospira biflexa provides insights into the evolution of Leptospira and the pathogenesis of leptospirosis.</title>
        <authorList>
            <person name="Picardeau M."/>
            <person name="Bulach D.M."/>
            <person name="Bouchier C."/>
            <person name="Zuerner R.L."/>
            <person name="Zidane N."/>
            <person name="Wilson P.J."/>
            <person name="Creno S."/>
            <person name="Kuczek E.S."/>
            <person name="Bommezzadri S."/>
            <person name="Davis J.C."/>
            <person name="McGrath A."/>
            <person name="Johnson M.J."/>
            <person name="Boursaux-Eude C."/>
            <person name="Seemann T."/>
            <person name="Rouy Z."/>
            <person name="Coppel R.L."/>
            <person name="Rood J.I."/>
            <person name="Lajus A."/>
            <person name="Davies J.K."/>
            <person name="Medigue C."/>
            <person name="Adler B."/>
        </authorList>
    </citation>
    <scope>NUCLEOTIDE SEQUENCE [LARGE SCALE GENOMIC DNA]</scope>
    <source>
        <strain>Patoc 1 / ATCC 23582 / Paris</strain>
    </source>
</reference>
<accession>B0SQL1</accession>
<feature type="chain" id="PRO_0000364585" description="Fructose-1,6-bisphosphatase class 1">
    <location>
        <begin position="1"/>
        <end position="343"/>
    </location>
</feature>
<feature type="binding site" evidence="1">
    <location>
        <position position="99"/>
    </location>
    <ligand>
        <name>Mg(2+)</name>
        <dbReference type="ChEBI" id="CHEBI:18420"/>
        <label>1</label>
    </ligand>
</feature>
<feature type="binding site" evidence="1">
    <location>
        <position position="121"/>
    </location>
    <ligand>
        <name>Mg(2+)</name>
        <dbReference type="ChEBI" id="CHEBI:18420"/>
        <label>1</label>
    </ligand>
</feature>
<feature type="binding site" evidence="1">
    <location>
        <position position="121"/>
    </location>
    <ligand>
        <name>Mg(2+)</name>
        <dbReference type="ChEBI" id="CHEBI:18420"/>
        <label>2</label>
    </ligand>
</feature>
<feature type="binding site" evidence="1">
    <location>
        <position position="123"/>
    </location>
    <ligand>
        <name>Mg(2+)</name>
        <dbReference type="ChEBI" id="CHEBI:18420"/>
        <label>1</label>
    </ligand>
</feature>
<feature type="binding site" evidence="1">
    <location>
        <begin position="124"/>
        <end position="127"/>
    </location>
    <ligand>
        <name>substrate</name>
    </ligand>
</feature>
<feature type="binding site" evidence="1">
    <location>
        <position position="124"/>
    </location>
    <ligand>
        <name>Mg(2+)</name>
        <dbReference type="ChEBI" id="CHEBI:18420"/>
        <label>2</label>
    </ligand>
</feature>
<feature type="binding site" evidence="1">
    <location>
        <position position="218"/>
    </location>
    <ligand>
        <name>substrate</name>
    </ligand>
</feature>
<feature type="binding site" evidence="1">
    <location>
        <position position="250"/>
    </location>
    <ligand>
        <name>substrate</name>
    </ligand>
</feature>
<feature type="binding site" evidence="1">
    <location>
        <position position="283"/>
    </location>
    <ligand>
        <name>substrate</name>
    </ligand>
</feature>
<feature type="binding site" evidence="1">
    <location>
        <position position="289"/>
    </location>
    <ligand>
        <name>Mg(2+)</name>
        <dbReference type="ChEBI" id="CHEBI:18420"/>
        <label>2</label>
    </ligand>
</feature>
<name>F16PA_LEPBP</name>